<sequence length="222" mass="24506">MVLLSKFDFSGKESGKFELPDAFFTEGKEQSVKDYLVAIQANKRQWSACTRGRSEVSHSTKKPFRQKGTGNARQGCLAAPQFRGGGIVFGPKPKFDQHIRINKKERRAAIRLLLAQKIQTGKLIVAENSVFVSSLDAPKTKEALRFLKECNVECRGVLFVDGLAHVGSNENLRLSVRNLSAVRGFTYGENISGYDIAAARNIVVSEKALELLVESLVSTTKD</sequence>
<gene>
    <name evidence="1" type="primary">rplD</name>
    <name type="synonym">rl4</name>
    <name type="ordered locus">CT_527</name>
</gene>
<reference key="1">
    <citation type="journal article" date="1998" name="Science">
        <title>Genome sequence of an obligate intracellular pathogen of humans: Chlamydia trachomatis.</title>
        <authorList>
            <person name="Stephens R.S."/>
            <person name="Kalman S."/>
            <person name="Lammel C.J."/>
            <person name="Fan J."/>
            <person name="Marathe R."/>
            <person name="Aravind L."/>
            <person name="Mitchell W.P."/>
            <person name="Olinger L."/>
            <person name="Tatusov R.L."/>
            <person name="Zhao Q."/>
            <person name="Koonin E.V."/>
            <person name="Davis R.W."/>
        </authorList>
    </citation>
    <scope>NUCLEOTIDE SEQUENCE [LARGE SCALE GENOMIC DNA]</scope>
    <source>
        <strain>ATCC VR-885 / DSM 19411 / UW-3/Cx</strain>
    </source>
</reference>
<organism>
    <name type="scientific">Chlamydia trachomatis serovar D (strain ATCC VR-885 / DSM 19411 / UW-3/Cx)</name>
    <dbReference type="NCBI Taxonomy" id="272561"/>
    <lineage>
        <taxon>Bacteria</taxon>
        <taxon>Pseudomonadati</taxon>
        <taxon>Chlamydiota</taxon>
        <taxon>Chlamydiia</taxon>
        <taxon>Chlamydiales</taxon>
        <taxon>Chlamydiaceae</taxon>
        <taxon>Chlamydia/Chlamydophila group</taxon>
        <taxon>Chlamydia</taxon>
    </lineage>
</organism>
<feature type="chain" id="PRO_0000129205" description="Large ribosomal subunit protein uL4">
    <location>
        <begin position="1"/>
        <end position="222"/>
    </location>
</feature>
<feature type="region of interest" description="Disordered" evidence="2">
    <location>
        <begin position="50"/>
        <end position="72"/>
    </location>
</feature>
<proteinExistence type="inferred from homology"/>
<accession>O84532</accession>
<name>RL4_CHLTR</name>
<keyword id="KW-1185">Reference proteome</keyword>
<keyword id="KW-0687">Ribonucleoprotein</keyword>
<keyword id="KW-0689">Ribosomal protein</keyword>
<keyword id="KW-0694">RNA-binding</keyword>
<keyword id="KW-0699">rRNA-binding</keyword>
<dbReference type="EMBL" id="AE001273">
    <property type="protein sequence ID" value="AAC68128.1"/>
    <property type="molecule type" value="Genomic_DNA"/>
</dbReference>
<dbReference type="PIR" id="E71507">
    <property type="entry name" value="E71507"/>
</dbReference>
<dbReference type="RefSeq" id="NP_220042.1">
    <property type="nucleotide sequence ID" value="NC_000117.1"/>
</dbReference>
<dbReference type="RefSeq" id="WP_010725242.1">
    <property type="nucleotide sequence ID" value="NC_000117.1"/>
</dbReference>
<dbReference type="SMR" id="O84532"/>
<dbReference type="FunCoup" id="O84532">
    <property type="interactions" value="276"/>
</dbReference>
<dbReference type="STRING" id="272561.CT_527"/>
<dbReference type="EnsemblBacteria" id="AAC68128">
    <property type="protein sequence ID" value="AAC68128"/>
    <property type="gene ID" value="CT_527"/>
</dbReference>
<dbReference type="GeneID" id="884315"/>
<dbReference type="KEGG" id="ctr:CT_527"/>
<dbReference type="PATRIC" id="fig|272561.5.peg.571"/>
<dbReference type="HOGENOM" id="CLU_041575_5_2_0"/>
<dbReference type="InParanoid" id="O84532"/>
<dbReference type="OrthoDB" id="9803201at2"/>
<dbReference type="Proteomes" id="UP000000431">
    <property type="component" value="Chromosome"/>
</dbReference>
<dbReference type="GO" id="GO:1990904">
    <property type="term" value="C:ribonucleoprotein complex"/>
    <property type="evidence" value="ECO:0007669"/>
    <property type="project" value="UniProtKB-KW"/>
</dbReference>
<dbReference type="GO" id="GO:0005840">
    <property type="term" value="C:ribosome"/>
    <property type="evidence" value="ECO:0007669"/>
    <property type="project" value="UniProtKB-KW"/>
</dbReference>
<dbReference type="GO" id="GO:0019843">
    <property type="term" value="F:rRNA binding"/>
    <property type="evidence" value="ECO:0007669"/>
    <property type="project" value="UniProtKB-UniRule"/>
</dbReference>
<dbReference type="GO" id="GO:0003735">
    <property type="term" value="F:structural constituent of ribosome"/>
    <property type="evidence" value="ECO:0000318"/>
    <property type="project" value="GO_Central"/>
</dbReference>
<dbReference type="GO" id="GO:0006412">
    <property type="term" value="P:translation"/>
    <property type="evidence" value="ECO:0007669"/>
    <property type="project" value="UniProtKB-UniRule"/>
</dbReference>
<dbReference type="FunFam" id="3.40.1370.10:FF:000008">
    <property type="entry name" value="50S ribosomal protein L4"/>
    <property type="match status" value="1"/>
</dbReference>
<dbReference type="Gene3D" id="3.40.1370.10">
    <property type="match status" value="1"/>
</dbReference>
<dbReference type="HAMAP" id="MF_01328_B">
    <property type="entry name" value="Ribosomal_uL4_B"/>
    <property type="match status" value="1"/>
</dbReference>
<dbReference type="InterPro" id="IPR002136">
    <property type="entry name" value="Ribosomal_uL4"/>
</dbReference>
<dbReference type="InterPro" id="IPR013005">
    <property type="entry name" value="Ribosomal_uL4-like"/>
</dbReference>
<dbReference type="InterPro" id="IPR023574">
    <property type="entry name" value="Ribosomal_uL4_dom_sf"/>
</dbReference>
<dbReference type="NCBIfam" id="TIGR03953">
    <property type="entry name" value="rplD_bact"/>
    <property type="match status" value="1"/>
</dbReference>
<dbReference type="PANTHER" id="PTHR10746">
    <property type="entry name" value="50S RIBOSOMAL PROTEIN L4"/>
    <property type="match status" value="1"/>
</dbReference>
<dbReference type="PANTHER" id="PTHR10746:SF6">
    <property type="entry name" value="LARGE RIBOSOMAL SUBUNIT PROTEIN UL4M"/>
    <property type="match status" value="1"/>
</dbReference>
<dbReference type="Pfam" id="PF00573">
    <property type="entry name" value="Ribosomal_L4"/>
    <property type="match status" value="1"/>
</dbReference>
<dbReference type="SUPFAM" id="SSF52166">
    <property type="entry name" value="Ribosomal protein L4"/>
    <property type="match status" value="1"/>
</dbReference>
<comment type="function">
    <text evidence="1">One of the primary rRNA binding proteins, this protein initially binds near the 5'-end of the 23S rRNA. It is important during the early stages of 50S assembly. It makes multiple contacts with different domains of the 23S rRNA in the assembled 50S subunit and ribosome.</text>
</comment>
<comment type="function">
    <text evidence="1">Forms part of the polypeptide exit tunnel.</text>
</comment>
<comment type="subunit">
    <text evidence="1">Part of the 50S ribosomal subunit.</text>
</comment>
<comment type="similarity">
    <text evidence="1">Belongs to the universal ribosomal protein uL4 family.</text>
</comment>
<protein>
    <recommendedName>
        <fullName evidence="1">Large ribosomal subunit protein uL4</fullName>
    </recommendedName>
    <alternativeName>
        <fullName evidence="3">50S ribosomal protein L4</fullName>
    </alternativeName>
</protein>
<evidence type="ECO:0000255" key="1">
    <source>
        <dbReference type="HAMAP-Rule" id="MF_01328"/>
    </source>
</evidence>
<evidence type="ECO:0000256" key="2">
    <source>
        <dbReference type="SAM" id="MobiDB-lite"/>
    </source>
</evidence>
<evidence type="ECO:0000305" key="3"/>